<comment type="function">
    <text evidence="1">Part of the ABC transporter complex MetNIQ involved in methionine import. Responsible for energy coupling to the transport system.</text>
</comment>
<comment type="catalytic activity">
    <reaction evidence="1">
        <text>L-methionine(out) + ATP + H2O = L-methionine(in) + ADP + phosphate + H(+)</text>
        <dbReference type="Rhea" id="RHEA:29779"/>
        <dbReference type="ChEBI" id="CHEBI:15377"/>
        <dbReference type="ChEBI" id="CHEBI:15378"/>
        <dbReference type="ChEBI" id="CHEBI:30616"/>
        <dbReference type="ChEBI" id="CHEBI:43474"/>
        <dbReference type="ChEBI" id="CHEBI:57844"/>
        <dbReference type="ChEBI" id="CHEBI:456216"/>
        <dbReference type="EC" id="7.4.2.11"/>
    </reaction>
</comment>
<comment type="catalytic activity">
    <reaction evidence="1">
        <text>D-methionine(out) + ATP + H2O = D-methionine(in) + ADP + phosphate + H(+)</text>
        <dbReference type="Rhea" id="RHEA:29767"/>
        <dbReference type="ChEBI" id="CHEBI:15377"/>
        <dbReference type="ChEBI" id="CHEBI:15378"/>
        <dbReference type="ChEBI" id="CHEBI:30616"/>
        <dbReference type="ChEBI" id="CHEBI:43474"/>
        <dbReference type="ChEBI" id="CHEBI:57932"/>
        <dbReference type="ChEBI" id="CHEBI:456216"/>
        <dbReference type="EC" id="7.4.2.11"/>
    </reaction>
</comment>
<comment type="subunit">
    <text evidence="1">The complex is composed of two ATP-binding proteins (MetN), two transmembrane proteins (MetI) and a solute-binding protein (MetQ).</text>
</comment>
<comment type="subcellular location">
    <subcellularLocation>
        <location evidence="1">Cell membrane</location>
        <topology evidence="1">Peripheral membrane protein</topology>
    </subcellularLocation>
</comment>
<comment type="similarity">
    <text evidence="1">Belongs to the ABC transporter superfamily. Methionine importer (TC 3.A.1.24) family.</text>
</comment>
<accession>Q895C4</accession>
<dbReference type="EC" id="7.4.2.11" evidence="1"/>
<dbReference type="EMBL" id="AE015927">
    <property type="protein sequence ID" value="AAO35916.1"/>
    <property type="molecule type" value="Genomic_DNA"/>
</dbReference>
<dbReference type="RefSeq" id="WP_011099578.1">
    <property type="nucleotide sequence ID" value="NC_004557.1"/>
</dbReference>
<dbReference type="SMR" id="Q895C4"/>
<dbReference type="STRING" id="212717.CTC_01355"/>
<dbReference type="GeneID" id="24254862"/>
<dbReference type="KEGG" id="ctc:CTC_01355"/>
<dbReference type="HOGENOM" id="CLU_000604_1_3_9"/>
<dbReference type="OrthoDB" id="9804199at2"/>
<dbReference type="Proteomes" id="UP000001412">
    <property type="component" value="Chromosome"/>
</dbReference>
<dbReference type="GO" id="GO:0005886">
    <property type="term" value="C:plasma membrane"/>
    <property type="evidence" value="ECO:0007669"/>
    <property type="project" value="UniProtKB-SubCell"/>
</dbReference>
<dbReference type="GO" id="GO:0033232">
    <property type="term" value="F:ABC-type D-methionine transporter activity"/>
    <property type="evidence" value="ECO:0007669"/>
    <property type="project" value="UniProtKB-EC"/>
</dbReference>
<dbReference type="GO" id="GO:0005524">
    <property type="term" value="F:ATP binding"/>
    <property type="evidence" value="ECO:0007669"/>
    <property type="project" value="UniProtKB-KW"/>
</dbReference>
<dbReference type="GO" id="GO:0016887">
    <property type="term" value="F:ATP hydrolysis activity"/>
    <property type="evidence" value="ECO:0007669"/>
    <property type="project" value="InterPro"/>
</dbReference>
<dbReference type="CDD" id="cd03258">
    <property type="entry name" value="ABC_MetN_methionine_transporter"/>
    <property type="match status" value="1"/>
</dbReference>
<dbReference type="FunFam" id="3.40.50.300:FF:000056">
    <property type="entry name" value="Cell division ATP-binding protein FtsE"/>
    <property type="match status" value="1"/>
</dbReference>
<dbReference type="Gene3D" id="3.30.70.260">
    <property type="match status" value="1"/>
</dbReference>
<dbReference type="Gene3D" id="3.40.50.300">
    <property type="entry name" value="P-loop containing nucleotide triphosphate hydrolases"/>
    <property type="match status" value="1"/>
</dbReference>
<dbReference type="InterPro" id="IPR003593">
    <property type="entry name" value="AAA+_ATPase"/>
</dbReference>
<dbReference type="InterPro" id="IPR003439">
    <property type="entry name" value="ABC_transporter-like_ATP-bd"/>
</dbReference>
<dbReference type="InterPro" id="IPR017871">
    <property type="entry name" value="ABC_transporter-like_CS"/>
</dbReference>
<dbReference type="InterPro" id="IPR045865">
    <property type="entry name" value="ACT-like_dom_sf"/>
</dbReference>
<dbReference type="InterPro" id="IPR041701">
    <property type="entry name" value="MetN_ABC"/>
</dbReference>
<dbReference type="InterPro" id="IPR050086">
    <property type="entry name" value="MetN_ABC_transporter-like"/>
</dbReference>
<dbReference type="InterPro" id="IPR018449">
    <property type="entry name" value="NIL_domain"/>
</dbReference>
<dbReference type="InterPro" id="IPR027417">
    <property type="entry name" value="P-loop_NTPase"/>
</dbReference>
<dbReference type="PANTHER" id="PTHR43166">
    <property type="entry name" value="AMINO ACID IMPORT ATP-BINDING PROTEIN"/>
    <property type="match status" value="1"/>
</dbReference>
<dbReference type="PANTHER" id="PTHR43166:SF30">
    <property type="entry name" value="METHIONINE IMPORT ATP-BINDING PROTEIN METN"/>
    <property type="match status" value="1"/>
</dbReference>
<dbReference type="Pfam" id="PF00005">
    <property type="entry name" value="ABC_tran"/>
    <property type="match status" value="1"/>
</dbReference>
<dbReference type="Pfam" id="PF09383">
    <property type="entry name" value="NIL"/>
    <property type="match status" value="1"/>
</dbReference>
<dbReference type="SMART" id="SM00382">
    <property type="entry name" value="AAA"/>
    <property type="match status" value="1"/>
</dbReference>
<dbReference type="SMART" id="SM00930">
    <property type="entry name" value="NIL"/>
    <property type="match status" value="1"/>
</dbReference>
<dbReference type="SUPFAM" id="SSF55021">
    <property type="entry name" value="ACT-like"/>
    <property type="match status" value="1"/>
</dbReference>
<dbReference type="SUPFAM" id="SSF52540">
    <property type="entry name" value="P-loop containing nucleoside triphosphate hydrolases"/>
    <property type="match status" value="1"/>
</dbReference>
<dbReference type="PROSITE" id="PS00211">
    <property type="entry name" value="ABC_TRANSPORTER_1"/>
    <property type="match status" value="1"/>
</dbReference>
<dbReference type="PROSITE" id="PS50893">
    <property type="entry name" value="ABC_TRANSPORTER_2"/>
    <property type="match status" value="1"/>
</dbReference>
<dbReference type="PROSITE" id="PS51264">
    <property type="entry name" value="METN"/>
    <property type="match status" value="1"/>
</dbReference>
<keyword id="KW-0029">Amino-acid transport</keyword>
<keyword id="KW-0067">ATP-binding</keyword>
<keyword id="KW-1003">Cell membrane</keyword>
<keyword id="KW-0472">Membrane</keyword>
<keyword id="KW-0547">Nucleotide-binding</keyword>
<keyword id="KW-1185">Reference proteome</keyword>
<keyword id="KW-1278">Translocase</keyword>
<keyword id="KW-0813">Transport</keyword>
<reference key="1">
    <citation type="journal article" date="2003" name="Proc. Natl. Acad. Sci. U.S.A.">
        <title>The genome sequence of Clostridium tetani, the causative agent of tetanus disease.</title>
        <authorList>
            <person name="Brueggemann H."/>
            <person name="Baeumer S."/>
            <person name="Fricke W.F."/>
            <person name="Wiezer A."/>
            <person name="Liesegang H."/>
            <person name="Decker I."/>
            <person name="Herzberg C."/>
            <person name="Martinez-Arias R."/>
            <person name="Merkl R."/>
            <person name="Henne A."/>
            <person name="Gottschalk G."/>
        </authorList>
    </citation>
    <scope>NUCLEOTIDE SEQUENCE [LARGE SCALE GENOMIC DNA]</scope>
    <source>
        <strain>Massachusetts / E88</strain>
    </source>
</reference>
<proteinExistence type="inferred from homology"/>
<feature type="chain" id="PRO_0000270285" description="Methionine import ATP-binding protein MetN">
    <location>
        <begin position="1"/>
        <end position="318"/>
    </location>
</feature>
<feature type="domain" description="ABC transporter" evidence="1">
    <location>
        <begin position="2"/>
        <end position="237"/>
    </location>
</feature>
<feature type="binding site" evidence="1">
    <location>
        <begin position="34"/>
        <end position="41"/>
    </location>
    <ligand>
        <name>ATP</name>
        <dbReference type="ChEBI" id="CHEBI:30616"/>
    </ligand>
</feature>
<organism>
    <name type="scientific">Clostridium tetani (strain Massachusetts / E88)</name>
    <dbReference type="NCBI Taxonomy" id="212717"/>
    <lineage>
        <taxon>Bacteria</taxon>
        <taxon>Bacillati</taxon>
        <taxon>Bacillota</taxon>
        <taxon>Clostridia</taxon>
        <taxon>Eubacteriales</taxon>
        <taxon>Clostridiaceae</taxon>
        <taxon>Clostridium</taxon>
    </lineage>
</organism>
<evidence type="ECO:0000255" key="1">
    <source>
        <dbReference type="HAMAP-Rule" id="MF_01719"/>
    </source>
</evidence>
<protein>
    <recommendedName>
        <fullName evidence="1">Methionine import ATP-binding protein MetN</fullName>
        <ecNumber evidence="1">7.4.2.11</ecNumber>
    </recommendedName>
</protein>
<sequence length="318" mass="36069">MIEIKDVGKIFGDTKVLENISLDIKEGEVFGIIGRSGAGKSTLLRCLNGLENYDEGSIKVMDKEVKDLNNIELRKLRKDMGMIFQGFNIMNSKNIYDNVALPLQVWKKDKKYIDEKVRELLKLVGLENKAKSYPRELSGGQKQRVAIARALTMEPKVLLCDEATSALDPETTKSILKLIQKINKELKITVVVVTHQMEVIKEICNRIALIDGRKVSAYGEVKDLFLRPEGELKKIIEQEELLPNEGVNIKLFFPSNASQQSVITSMARELNVDFSIVWGKLESFRKEVLGSLIINIEEDKKVAICEYLNKKSILWEVI</sequence>
<gene>
    <name evidence="1" type="primary">metN</name>
    <name type="ordered locus">CTC_01355</name>
</gene>
<name>METN_CLOTE</name>